<proteinExistence type="inferred from homology"/>
<organism>
    <name type="scientific">Kluyveromyces lactis (strain ATCC 8585 / CBS 2359 / DSM 70799 / NBRC 1267 / NRRL Y-1140 / WM37)</name>
    <name type="common">Yeast</name>
    <name type="synonym">Candida sphaerica</name>
    <dbReference type="NCBI Taxonomy" id="284590"/>
    <lineage>
        <taxon>Eukaryota</taxon>
        <taxon>Fungi</taxon>
        <taxon>Dikarya</taxon>
        <taxon>Ascomycota</taxon>
        <taxon>Saccharomycotina</taxon>
        <taxon>Saccharomycetes</taxon>
        <taxon>Saccharomycetales</taxon>
        <taxon>Saccharomycetaceae</taxon>
        <taxon>Kluyveromyces</taxon>
    </lineage>
</organism>
<accession>Q6CPD5</accession>
<feature type="chain" id="PRO_0000223654" description="Serine/threonine-protein phosphatase 4 regulatory subunit 2">
    <location>
        <begin position="1"/>
        <end position="402"/>
    </location>
</feature>
<feature type="region of interest" description="Disordered" evidence="2">
    <location>
        <begin position="206"/>
        <end position="270"/>
    </location>
</feature>
<feature type="region of interest" description="Disordered" evidence="2">
    <location>
        <begin position="291"/>
        <end position="311"/>
    </location>
</feature>
<feature type="region of interest" description="Disordered" evidence="2">
    <location>
        <begin position="331"/>
        <end position="402"/>
    </location>
</feature>
<feature type="compositionally biased region" description="Acidic residues" evidence="2">
    <location>
        <begin position="206"/>
        <end position="248"/>
    </location>
</feature>
<feature type="compositionally biased region" description="Low complexity" evidence="2">
    <location>
        <begin position="348"/>
        <end position="358"/>
    </location>
</feature>
<feature type="compositionally biased region" description="Polar residues" evidence="2">
    <location>
        <begin position="371"/>
        <end position="396"/>
    </location>
</feature>
<protein>
    <recommendedName>
        <fullName>Serine/threonine-protein phosphatase 4 regulatory subunit 2</fullName>
        <shortName>PP4R2</shortName>
    </recommendedName>
</protein>
<name>PP4R2_KLULA</name>
<reference key="1">
    <citation type="journal article" date="2004" name="Nature">
        <title>Genome evolution in yeasts.</title>
        <authorList>
            <person name="Dujon B."/>
            <person name="Sherman D."/>
            <person name="Fischer G."/>
            <person name="Durrens P."/>
            <person name="Casaregola S."/>
            <person name="Lafontaine I."/>
            <person name="de Montigny J."/>
            <person name="Marck C."/>
            <person name="Neuveglise C."/>
            <person name="Talla E."/>
            <person name="Goffard N."/>
            <person name="Frangeul L."/>
            <person name="Aigle M."/>
            <person name="Anthouard V."/>
            <person name="Babour A."/>
            <person name="Barbe V."/>
            <person name="Barnay S."/>
            <person name="Blanchin S."/>
            <person name="Beckerich J.-M."/>
            <person name="Beyne E."/>
            <person name="Bleykasten C."/>
            <person name="Boisrame A."/>
            <person name="Boyer J."/>
            <person name="Cattolico L."/>
            <person name="Confanioleri F."/>
            <person name="de Daruvar A."/>
            <person name="Despons L."/>
            <person name="Fabre E."/>
            <person name="Fairhead C."/>
            <person name="Ferry-Dumazet H."/>
            <person name="Groppi A."/>
            <person name="Hantraye F."/>
            <person name="Hennequin C."/>
            <person name="Jauniaux N."/>
            <person name="Joyet P."/>
            <person name="Kachouri R."/>
            <person name="Kerrest A."/>
            <person name="Koszul R."/>
            <person name="Lemaire M."/>
            <person name="Lesur I."/>
            <person name="Ma L."/>
            <person name="Muller H."/>
            <person name="Nicaud J.-M."/>
            <person name="Nikolski M."/>
            <person name="Oztas S."/>
            <person name="Ozier-Kalogeropoulos O."/>
            <person name="Pellenz S."/>
            <person name="Potier S."/>
            <person name="Richard G.-F."/>
            <person name="Straub M.-L."/>
            <person name="Suleau A."/>
            <person name="Swennen D."/>
            <person name="Tekaia F."/>
            <person name="Wesolowski-Louvel M."/>
            <person name="Westhof E."/>
            <person name="Wirth B."/>
            <person name="Zeniou-Meyer M."/>
            <person name="Zivanovic Y."/>
            <person name="Bolotin-Fukuhara M."/>
            <person name="Thierry A."/>
            <person name="Bouchier C."/>
            <person name="Caudron B."/>
            <person name="Scarpelli C."/>
            <person name="Gaillardin C."/>
            <person name="Weissenbach J."/>
            <person name="Wincker P."/>
            <person name="Souciet J.-L."/>
        </authorList>
    </citation>
    <scope>NUCLEOTIDE SEQUENCE [LARGE SCALE GENOMIC DNA]</scope>
    <source>
        <strain>ATCC 8585 / CBS 2359 / DSM 70799 / NBRC 1267 / NRRL Y-1140 / WM37</strain>
    </source>
</reference>
<keyword id="KW-0539">Nucleus</keyword>
<keyword id="KW-1185">Reference proteome</keyword>
<comment type="function">
    <text evidence="1">Regulatory subunit of the histone H2A phosphatase complex, which dephosphorylates H2AS128ph (gamma-H2A) that has been displaced from sites of DNA lesions in the double-stranded DNA break repair process. Dephosphorylation is necessary for efficient recovery from the DNA damage checkpoint (By similarity).</text>
</comment>
<comment type="subunit">
    <text evidence="1">Regulatory subunit (R2) of the histone H2A phosphatase complex (HTP-C) consisting of PPH3, PSY2 and PSY4.</text>
</comment>
<comment type="subcellular location">
    <subcellularLocation>
        <location evidence="1">Nucleus</location>
    </subcellularLocation>
</comment>
<comment type="similarity">
    <text evidence="3">Belongs to the PPP4R2 family.</text>
</comment>
<sequence>MMGIKSRHLYDRLTKIVIDKDLSAFNEISPSQLIPQLSEHFSITIPKEIFNYNEDQEEDLLHRLKELSRYLVVKFAKRDKYPFTIQRICELSYHPLQYFPVHSLQKFVSAMEKCCLVNTDWTPRLGKECPNTNPMEDVSLIPIEWIRTNKEDEKSLQAFISKIETIVAVNFGYDDFDDDNEDGTDHDIGRGYDNHGDVLIEEYEEMDEEFEDEDYEDHEDEEEDEEDEDNDSDVDEMEAEEVEEDASDDISIGEIAENDDQDNAHTDVTDTQLKYNGVPIEEELRLSSTSSVLSVSSHAANEDENESILSRKRNVTELDDYQYKETKENDGFITTPKKSKMPLNEFGSSSSMVSPVVSNQEDPSRNDDSRINTFISPDTTNSVTQAEKNELSTSPLQDKKRM</sequence>
<dbReference type="EMBL" id="CR382125">
    <property type="protein sequence ID" value="CAG99291.1"/>
    <property type="molecule type" value="Genomic_DNA"/>
</dbReference>
<dbReference type="RefSeq" id="XP_454204.1">
    <property type="nucleotide sequence ID" value="XM_454204.1"/>
</dbReference>
<dbReference type="FunCoup" id="Q6CPD5">
    <property type="interactions" value="71"/>
</dbReference>
<dbReference type="STRING" id="284590.Q6CPD5"/>
<dbReference type="PaxDb" id="284590-Q6CPD5"/>
<dbReference type="KEGG" id="kla:KLLA0_E05721g"/>
<dbReference type="eggNOG" id="ENOG502S2WZ">
    <property type="taxonomic scope" value="Eukaryota"/>
</dbReference>
<dbReference type="HOGENOM" id="CLU_036743_1_0_1"/>
<dbReference type="InParanoid" id="Q6CPD5"/>
<dbReference type="OMA" id="CYDPFKY"/>
<dbReference type="Proteomes" id="UP000000598">
    <property type="component" value="Chromosome E"/>
</dbReference>
<dbReference type="GO" id="GO:0005634">
    <property type="term" value="C:nucleus"/>
    <property type="evidence" value="ECO:0007669"/>
    <property type="project" value="UniProtKB-SubCell"/>
</dbReference>
<dbReference type="GO" id="GO:0030289">
    <property type="term" value="C:protein phosphatase 4 complex"/>
    <property type="evidence" value="ECO:0007669"/>
    <property type="project" value="InterPro"/>
</dbReference>
<dbReference type="GO" id="GO:0019888">
    <property type="term" value="F:protein phosphatase regulator activity"/>
    <property type="evidence" value="ECO:0007669"/>
    <property type="project" value="InterPro"/>
</dbReference>
<dbReference type="InterPro" id="IPR015267">
    <property type="entry name" value="PPP4R2"/>
</dbReference>
<dbReference type="Pfam" id="PF09184">
    <property type="entry name" value="PPP4R2"/>
    <property type="match status" value="1"/>
</dbReference>
<gene>
    <name type="primary">PSY4</name>
    <name type="ordered locus">KLLA0E05676g</name>
</gene>
<evidence type="ECO:0000250" key="1"/>
<evidence type="ECO:0000256" key="2">
    <source>
        <dbReference type="SAM" id="MobiDB-lite"/>
    </source>
</evidence>
<evidence type="ECO:0000305" key="3"/>